<feature type="chain" id="PRO_0000363094" description="Fructose-1,6-bisphosphatase class 3">
    <location>
        <begin position="1"/>
        <end position="643"/>
    </location>
</feature>
<accession>Q036S2</accession>
<name>F16PC_LACP3</name>
<keyword id="KW-0119">Carbohydrate metabolism</keyword>
<keyword id="KW-0378">Hydrolase</keyword>
<keyword id="KW-0464">Manganese</keyword>
<keyword id="KW-1185">Reference proteome</keyword>
<organism>
    <name type="scientific">Lacticaseibacillus paracasei (strain ATCC 334 / BCRC 17002 / CCUG 31169 / CIP 107868 / KCTC 3260 / NRRL B-441)</name>
    <name type="common">Lactobacillus paracasei</name>
    <dbReference type="NCBI Taxonomy" id="321967"/>
    <lineage>
        <taxon>Bacteria</taxon>
        <taxon>Bacillati</taxon>
        <taxon>Bacillota</taxon>
        <taxon>Bacilli</taxon>
        <taxon>Lactobacillales</taxon>
        <taxon>Lactobacillaceae</taxon>
        <taxon>Lacticaseibacillus</taxon>
    </lineage>
</organism>
<evidence type="ECO:0000255" key="1">
    <source>
        <dbReference type="HAMAP-Rule" id="MF_01854"/>
    </source>
</evidence>
<gene>
    <name evidence="1" type="primary">fbp</name>
    <name type="ordered locus">LSEI_2045</name>
</gene>
<reference key="1">
    <citation type="journal article" date="2006" name="Proc. Natl. Acad. Sci. U.S.A.">
        <title>Comparative genomics of the lactic acid bacteria.</title>
        <authorList>
            <person name="Makarova K.S."/>
            <person name="Slesarev A."/>
            <person name="Wolf Y.I."/>
            <person name="Sorokin A."/>
            <person name="Mirkin B."/>
            <person name="Koonin E.V."/>
            <person name="Pavlov A."/>
            <person name="Pavlova N."/>
            <person name="Karamychev V."/>
            <person name="Polouchine N."/>
            <person name="Shakhova V."/>
            <person name="Grigoriev I."/>
            <person name="Lou Y."/>
            <person name="Rohksar D."/>
            <person name="Lucas S."/>
            <person name="Huang K."/>
            <person name="Goodstein D.M."/>
            <person name="Hawkins T."/>
            <person name="Plengvidhya V."/>
            <person name="Welker D."/>
            <person name="Hughes J."/>
            <person name="Goh Y."/>
            <person name="Benson A."/>
            <person name="Baldwin K."/>
            <person name="Lee J.-H."/>
            <person name="Diaz-Muniz I."/>
            <person name="Dosti B."/>
            <person name="Smeianov V."/>
            <person name="Wechter W."/>
            <person name="Barabote R."/>
            <person name="Lorca G."/>
            <person name="Altermann E."/>
            <person name="Barrangou R."/>
            <person name="Ganesan B."/>
            <person name="Xie Y."/>
            <person name="Rawsthorne H."/>
            <person name="Tamir D."/>
            <person name="Parker C."/>
            <person name="Breidt F."/>
            <person name="Broadbent J.R."/>
            <person name="Hutkins R."/>
            <person name="O'Sullivan D."/>
            <person name="Steele J."/>
            <person name="Unlu G."/>
            <person name="Saier M.H. Jr."/>
            <person name="Klaenhammer T."/>
            <person name="Richardson P."/>
            <person name="Kozyavkin S."/>
            <person name="Weimer B.C."/>
            <person name="Mills D.A."/>
        </authorList>
    </citation>
    <scope>NUCLEOTIDE SEQUENCE [LARGE SCALE GENOMIC DNA]</scope>
    <source>
        <strain>ATCC 334 / BCRC 17002 / CCUG 31169 / CIP 107868 / KCTC 3260 / NRRL B-441</strain>
    </source>
</reference>
<comment type="catalytic activity">
    <reaction evidence="1">
        <text>beta-D-fructose 1,6-bisphosphate + H2O = beta-D-fructose 6-phosphate + phosphate</text>
        <dbReference type="Rhea" id="RHEA:11064"/>
        <dbReference type="ChEBI" id="CHEBI:15377"/>
        <dbReference type="ChEBI" id="CHEBI:32966"/>
        <dbReference type="ChEBI" id="CHEBI:43474"/>
        <dbReference type="ChEBI" id="CHEBI:57634"/>
        <dbReference type="EC" id="3.1.3.11"/>
    </reaction>
</comment>
<comment type="cofactor">
    <cofactor evidence="1">
        <name>Mn(2+)</name>
        <dbReference type="ChEBI" id="CHEBI:29035"/>
    </cofactor>
</comment>
<comment type="pathway">
    <text evidence="1">Carbohydrate biosynthesis; gluconeogenesis.</text>
</comment>
<comment type="similarity">
    <text evidence="1">Belongs to the FBPase class 3 family.</text>
</comment>
<sequence length="643" mass="73866">MDLYSELTAKYQTVPAIATEIINLEAILNLPKPTEAFMSDIHGEYNAFQHVLRNGSGNVKSKIRSCFRDEMTEATLQRFAFLVYYPSERMAAIHREMAGDDLQQWYLTTFRRLIRLLAFTATKYTRSKVRKAMAPEFVYITEELLYNDADTPDKLAYYWQIIRNLIVLEQADQWIAATCQTIQRLTVDHFHVVGDIYDRGPAPDQVVESLIRRDRRHSVDIQWGNHDILWIGGAAGSALCIANLVRISARYNNLSILEDVYGINLRHLARLAEQYYQDNPAFSPKMERSDRPITEAERLQITQIHQAIAMIQFKLEGPVIKRRPEFDMDHRLVLEKLAPDFSTIKLNGDTYTIENGCFATVDPADPYKLLPEEQEVIDSLVESFTHSEKLHRHMDFLLDHGSMYLRYNRNLLLHGCVPVDEDGNFIGLTIKGTTYTGRQLFDMLEANLRLAYSQPTENADLATDLMWYLWTGPNSPLFGKHDMTTFERYFISDPKAHVEGRNPYYHLRKDPEFIKKILAEFVLDPEVGHVINGHTPVKKGTDPIMANNKMIVIDGGFSKPYQKTTGIGGYTLLDNSYGMQLVTHQPFTTKADAITNLTDIISTRRVVETEARRRTVAETDIGTELQDEVEVLKRRLGELREED</sequence>
<proteinExistence type="inferred from homology"/>
<protein>
    <recommendedName>
        <fullName evidence="1">Fructose-1,6-bisphosphatase class 3</fullName>
        <shortName evidence="1">FBPase class 3</shortName>
        <ecNumber evidence="1">3.1.3.11</ecNumber>
    </recommendedName>
    <alternativeName>
        <fullName evidence="1">D-fructose-1,6-bisphosphate 1-phosphohydrolase class 3</fullName>
    </alternativeName>
</protein>
<dbReference type="EC" id="3.1.3.11" evidence="1"/>
<dbReference type="EMBL" id="CP000423">
    <property type="protein sequence ID" value="ABJ70800.1"/>
    <property type="molecule type" value="Genomic_DNA"/>
</dbReference>
<dbReference type="RefSeq" id="WP_011674732.1">
    <property type="nucleotide sequence ID" value="NC_008526.1"/>
</dbReference>
<dbReference type="RefSeq" id="YP_807242.1">
    <property type="nucleotide sequence ID" value="NC_008526.1"/>
</dbReference>
<dbReference type="STRING" id="321967.LSEI_2045"/>
<dbReference type="PaxDb" id="321967-LSEI_2045"/>
<dbReference type="KEGG" id="lca:LSEI_2045"/>
<dbReference type="PATRIC" id="fig|321967.11.peg.2008"/>
<dbReference type="HOGENOM" id="CLU_028392_2_0_9"/>
<dbReference type="UniPathway" id="UPA00138"/>
<dbReference type="Proteomes" id="UP000001651">
    <property type="component" value="Chromosome"/>
</dbReference>
<dbReference type="GO" id="GO:0042132">
    <property type="term" value="F:fructose 1,6-bisphosphate 1-phosphatase activity"/>
    <property type="evidence" value="ECO:0007669"/>
    <property type="project" value="UniProtKB-UniRule"/>
</dbReference>
<dbReference type="GO" id="GO:0006094">
    <property type="term" value="P:gluconeogenesis"/>
    <property type="evidence" value="ECO:0007669"/>
    <property type="project" value="UniProtKB-UniRule"/>
</dbReference>
<dbReference type="Gene3D" id="3.60.21.10">
    <property type="match status" value="1"/>
</dbReference>
<dbReference type="HAMAP" id="MF_01854">
    <property type="entry name" value="FBPase_class3"/>
    <property type="match status" value="1"/>
</dbReference>
<dbReference type="InterPro" id="IPR009164">
    <property type="entry name" value="FBPtase_class3"/>
</dbReference>
<dbReference type="InterPro" id="IPR029052">
    <property type="entry name" value="Metallo-depent_PP-like"/>
</dbReference>
<dbReference type="Pfam" id="PF06874">
    <property type="entry name" value="FBPase_2"/>
    <property type="match status" value="1"/>
</dbReference>
<dbReference type="PIRSF" id="PIRSF000906">
    <property type="entry name" value="FBPtase_Bacill"/>
    <property type="match status" value="1"/>
</dbReference>
<dbReference type="SUPFAM" id="SSF56300">
    <property type="entry name" value="Metallo-dependent phosphatases"/>
    <property type="match status" value="1"/>
</dbReference>